<evidence type="ECO:0000256" key="1">
    <source>
        <dbReference type="SAM" id="MobiDB-lite"/>
    </source>
</evidence>
<evidence type="ECO:0000305" key="2"/>
<protein>
    <recommendedName>
        <fullName>Protochlorophyllide reductase A, chloroplastic</fullName>
        <shortName>PCR A</shortName>
        <ecNumber>1.3.1.33</ecNumber>
    </recommendedName>
    <alternativeName>
        <fullName>NADPH-protochlorophyllide oxidoreductase A</fullName>
        <shortName>POR A</shortName>
    </alternativeName>
</protein>
<reference key="1">
    <citation type="journal article" date="1989" name="Mol. Gen. Genet.">
        <title>Nucleotide sequence of a cDNA coding for the NADPH-protochlorophyllide oxidoreductase (PCR) of barley (Hordeum vulgare L.) and its expression in Escherichia coli.</title>
        <authorList>
            <person name="Schuelz R."/>
            <person name="Steinmueller K."/>
            <person name="Klaas M."/>
            <person name="Forreiter C."/>
            <person name="Rasmussen S."/>
            <person name="Hiller C."/>
            <person name="Apel K."/>
        </authorList>
    </citation>
    <scope>NUCLEOTIDE SEQUENCE [MRNA]</scope>
    <scope>PARTIAL PROTEIN SEQUENCE</scope>
    <source>
        <strain>cv. Carina</strain>
        <tissue>Leaf</tissue>
    </source>
</reference>
<feature type="transit peptide" description="Chloroplast">
    <location>
        <begin position="1"/>
        <end position="74"/>
    </location>
</feature>
<feature type="chain" id="PRO_0000023293" description="Protochlorophyllide reductase A, chloroplastic">
    <location>
        <begin position="75"/>
        <end position="388"/>
    </location>
</feature>
<feature type="region of interest" description="Disordered" evidence="1">
    <location>
        <begin position="48"/>
        <end position="69"/>
    </location>
</feature>
<feature type="compositionally biased region" description="Low complexity" evidence="1">
    <location>
        <begin position="48"/>
        <end position="68"/>
    </location>
</feature>
<accession>P13653</accession>
<comment type="function">
    <text>Phototransformation of protochlorophyllide (Pchlide) to chlorophyllide (Chlide).</text>
</comment>
<comment type="catalytic activity">
    <reaction>
        <text>chlorophyllide a + NADP(+) = protochlorophyllide a + NADPH + H(+)</text>
        <dbReference type="Rhea" id="RHEA:11132"/>
        <dbReference type="ChEBI" id="CHEBI:15378"/>
        <dbReference type="ChEBI" id="CHEBI:57783"/>
        <dbReference type="ChEBI" id="CHEBI:58349"/>
        <dbReference type="ChEBI" id="CHEBI:83348"/>
        <dbReference type="ChEBI" id="CHEBI:83350"/>
        <dbReference type="EC" id="1.3.1.33"/>
    </reaction>
</comment>
<comment type="pathway">
    <text>Porphyrin-containing compound metabolism; chlorophyll biosynthesis.</text>
</comment>
<comment type="interaction">
    <interactant intactId="EBI-15724741">
        <id>P13653</id>
    </interactant>
    <interactant intactId="EBI-15724755">
        <id>Q42850</id>
        <label>PORB</label>
    </interactant>
    <organismsDiffer>false</organismsDiffer>
    <experiments>2</experiments>
</comment>
<comment type="subcellular location">
    <subcellularLocation>
        <location>Plastid</location>
        <location>Chloroplast</location>
    </subcellularLocation>
</comment>
<comment type="developmental stage">
    <text>Active only transiently in etiolated seedlings at the beginning of illumination.</text>
</comment>
<comment type="similarity">
    <text evidence="2">Belongs to the short-chain dehydrogenases/reductases (SDR) family. POR subfamily.</text>
</comment>
<dbReference type="EC" id="1.3.1.33"/>
<dbReference type="EMBL" id="X15869">
    <property type="protein sequence ID" value="CAA33879.1"/>
    <property type="molecule type" value="mRNA"/>
</dbReference>
<dbReference type="PIR" id="S04783">
    <property type="entry name" value="S04783"/>
</dbReference>
<dbReference type="SMR" id="P13653"/>
<dbReference type="DIP" id="DIP-46278N"/>
<dbReference type="IntAct" id="P13653">
    <property type="interactions" value="1"/>
</dbReference>
<dbReference type="BRENDA" id="1.3.1.33">
    <property type="organism ID" value="2687"/>
</dbReference>
<dbReference type="UniPathway" id="UPA00668"/>
<dbReference type="ExpressionAtlas" id="P13653">
    <property type="expression patterns" value="baseline and differential"/>
</dbReference>
<dbReference type="GO" id="GO:0009507">
    <property type="term" value="C:chloroplast"/>
    <property type="evidence" value="ECO:0007669"/>
    <property type="project" value="UniProtKB-SubCell"/>
</dbReference>
<dbReference type="GO" id="GO:0016630">
    <property type="term" value="F:protochlorophyllide reductase activity"/>
    <property type="evidence" value="ECO:0007669"/>
    <property type="project" value="UniProtKB-EC"/>
</dbReference>
<dbReference type="GO" id="GO:0015995">
    <property type="term" value="P:chlorophyll biosynthetic process"/>
    <property type="evidence" value="ECO:0007669"/>
    <property type="project" value="UniProtKB-UniPathway"/>
</dbReference>
<dbReference type="GO" id="GO:0015979">
    <property type="term" value="P:photosynthesis"/>
    <property type="evidence" value="ECO:0007669"/>
    <property type="project" value="UniProtKB-KW"/>
</dbReference>
<dbReference type="CDD" id="cd09810">
    <property type="entry name" value="LPOR_like_SDR_c_like"/>
    <property type="match status" value="1"/>
</dbReference>
<dbReference type="Gene3D" id="3.40.50.720">
    <property type="entry name" value="NAD(P)-binding Rossmann-like Domain"/>
    <property type="match status" value="1"/>
</dbReference>
<dbReference type="InterPro" id="IPR036291">
    <property type="entry name" value="NAD(P)-bd_dom_sf"/>
</dbReference>
<dbReference type="InterPro" id="IPR005979">
    <property type="entry name" value="Prochl_reduct"/>
</dbReference>
<dbReference type="InterPro" id="IPR002347">
    <property type="entry name" value="SDR_fam"/>
</dbReference>
<dbReference type="NCBIfam" id="TIGR01289">
    <property type="entry name" value="LPOR"/>
    <property type="match status" value="1"/>
</dbReference>
<dbReference type="PANTHER" id="PTHR44419:SF6">
    <property type="entry name" value="PROTOCHLOROPHYLLIDE REDUCTASE A, CHLOROPLASTIC"/>
    <property type="match status" value="1"/>
</dbReference>
<dbReference type="PANTHER" id="PTHR44419">
    <property type="entry name" value="PROTOCHLOROPHYLLIDE REDUCTASE C, CHLOROPLASTIC"/>
    <property type="match status" value="1"/>
</dbReference>
<dbReference type="Pfam" id="PF00106">
    <property type="entry name" value="adh_short"/>
    <property type="match status" value="1"/>
</dbReference>
<dbReference type="PRINTS" id="PR00081">
    <property type="entry name" value="GDHRDH"/>
</dbReference>
<dbReference type="SUPFAM" id="SSF51735">
    <property type="entry name" value="NAD(P)-binding Rossmann-fold domains"/>
    <property type="match status" value="1"/>
</dbReference>
<gene>
    <name type="primary">PORA</name>
</gene>
<sequence length="388" mass="41181">MALQLLPSTLSVPKKGSSMGAVAVKDTAAFLGVSSKAKKASLAVRTQVATAPSPVTTSPGSTASSPSGKKTLRQGVVVITGASSGLGLAAAKALAETGKWHVVMACRDFLKASKAAKAAGMADGSYTVMHLDLASLDSVRQFVDAFRRAEMPLDVLVCNAAIYRPTARTPTFTADGHEMSVGVNHLGHFLLARLLMEDLQKSDYPSRRMVIVGSITGNSNTLAGNVPPKASLGDLRGLAGGLSGASGSAMIDGDESFDGAKAYKDSKVCNMLTMQEFHRRYHEETGITFSSLYPGCIATTGLFREHIPLFRTLFPPFQKFVTKGFVSEAESGKRLAQVVAEPVLTKSGVYWSWNKDSASFENQLSQEASDPEKARKVWELSEKLVGLA</sequence>
<proteinExistence type="evidence at protein level"/>
<organism>
    <name type="scientific">Hordeum vulgare</name>
    <name type="common">Barley</name>
    <dbReference type="NCBI Taxonomy" id="4513"/>
    <lineage>
        <taxon>Eukaryota</taxon>
        <taxon>Viridiplantae</taxon>
        <taxon>Streptophyta</taxon>
        <taxon>Embryophyta</taxon>
        <taxon>Tracheophyta</taxon>
        <taxon>Spermatophyta</taxon>
        <taxon>Magnoliopsida</taxon>
        <taxon>Liliopsida</taxon>
        <taxon>Poales</taxon>
        <taxon>Poaceae</taxon>
        <taxon>BOP clade</taxon>
        <taxon>Pooideae</taxon>
        <taxon>Triticodae</taxon>
        <taxon>Triticeae</taxon>
        <taxon>Hordeinae</taxon>
        <taxon>Hordeum</taxon>
    </lineage>
</organism>
<keyword id="KW-0149">Chlorophyll biosynthesis</keyword>
<keyword id="KW-0150">Chloroplast</keyword>
<keyword id="KW-0903">Direct protein sequencing</keyword>
<keyword id="KW-0521">NADP</keyword>
<keyword id="KW-0560">Oxidoreductase</keyword>
<keyword id="KW-0602">Photosynthesis</keyword>
<keyword id="KW-0934">Plastid</keyword>
<keyword id="KW-0809">Transit peptide</keyword>
<name>PORA_HORVU</name>